<dbReference type="EMBL" id="AE003853">
    <property type="protein sequence ID" value="AAF96805.1"/>
    <property type="molecule type" value="Genomic_DNA"/>
</dbReference>
<dbReference type="PIR" id="B82403">
    <property type="entry name" value="B82403"/>
</dbReference>
<dbReference type="PDB" id="5EXV">
    <property type="method" value="X-ray"/>
    <property type="resolution" value="2.90 A"/>
    <property type="chains" value="A/B/C/D/E/F=27-193"/>
</dbReference>
<dbReference type="PDBsum" id="5EXV"/>
<dbReference type="SMR" id="Q9KL40"/>
<dbReference type="STRING" id="243277.VC_A0908"/>
<dbReference type="DNASU" id="2612247"/>
<dbReference type="EnsemblBacteria" id="AAF96805">
    <property type="protein sequence ID" value="AAF96805"/>
    <property type="gene ID" value="VC_A0908"/>
</dbReference>
<dbReference type="KEGG" id="vch:VC_A0908"/>
<dbReference type="eggNOG" id="COG3721">
    <property type="taxonomic scope" value="Bacteria"/>
</dbReference>
<dbReference type="HOGENOM" id="CLU_106714_0_0_6"/>
<dbReference type="Proteomes" id="UP000000584">
    <property type="component" value="Chromosome 2"/>
</dbReference>
<dbReference type="GO" id="GO:0005737">
    <property type="term" value="C:cytoplasm"/>
    <property type="evidence" value="ECO:0007669"/>
    <property type="project" value="UniProtKB-SubCell"/>
</dbReference>
<dbReference type="GO" id="GO:0046872">
    <property type="term" value="F:metal ion binding"/>
    <property type="evidence" value="ECO:0007669"/>
    <property type="project" value="UniProtKB-KW"/>
</dbReference>
<dbReference type="CDD" id="cd16829">
    <property type="entry name" value="ChuX_HutX-like"/>
    <property type="match status" value="1"/>
</dbReference>
<dbReference type="Gene3D" id="3.40.1570.10">
    <property type="entry name" value="HemS/ChuS/ChuX like domains"/>
    <property type="match status" value="1"/>
</dbReference>
<dbReference type="InterPro" id="IPR053733">
    <property type="entry name" value="Heme_Transport_Util_sf"/>
</dbReference>
<dbReference type="InterPro" id="IPR010413">
    <property type="entry name" value="HutX-like"/>
</dbReference>
<dbReference type="NCBIfam" id="TIGR04108">
    <property type="entry name" value="HutX"/>
    <property type="match status" value="1"/>
</dbReference>
<dbReference type="Pfam" id="PF06228">
    <property type="entry name" value="ChuX_HutX"/>
    <property type="match status" value="1"/>
</dbReference>
<dbReference type="PIRSF" id="PIRSF030840">
    <property type="entry name" value="DUF1008"/>
    <property type="match status" value="1"/>
</dbReference>
<dbReference type="SUPFAM" id="SSF144064">
    <property type="entry name" value="Heme iron utilization protein-like"/>
    <property type="match status" value="1"/>
</dbReference>
<organism>
    <name type="scientific">Vibrio cholerae serotype O1 (strain ATCC 39315 / El Tor Inaba N16961)</name>
    <dbReference type="NCBI Taxonomy" id="243277"/>
    <lineage>
        <taxon>Bacteria</taxon>
        <taxon>Pseudomonadati</taxon>
        <taxon>Pseudomonadota</taxon>
        <taxon>Gammaproteobacteria</taxon>
        <taxon>Vibrionales</taxon>
        <taxon>Vibrionaceae</taxon>
        <taxon>Vibrio</taxon>
    </lineage>
</organism>
<reference key="1">
    <citation type="journal article" date="2000" name="Nature">
        <title>DNA sequence of both chromosomes of the cholera pathogen Vibrio cholerae.</title>
        <authorList>
            <person name="Heidelberg J.F."/>
            <person name="Eisen J.A."/>
            <person name="Nelson W.C."/>
            <person name="Clayton R.A."/>
            <person name="Gwinn M.L."/>
            <person name="Dodson R.J."/>
            <person name="Haft D.H."/>
            <person name="Hickey E.K."/>
            <person name="Peterson J.D."/>
            <person name="Umayam L.A."/>
            <person name="Gill S.R."/>
            <person name="Nelson K.E."/>
            <person name="Read T.D."/>
            <person name="Tettelin H."/>
            <person name="Richardson D.L."/>
            <person name="Ermolaeva M.D."/>
            <person name="Vamathevan J.J."/>
            <person name="Bass S."/>
            <person name="Qin H."/>
            <person name="Dragoi I."/>
            <person name="Sellers P."/>
            <person name="McDonald L.A."/>
            <person name="Utterback T.R."/>
            <person name="Fleischmann R.D."/>
            <person name="Nierman W.C."/>
            <person name="White O."/>
            <person name="Salzberg S.L."/>
            <person name="Smith H.O."/>
            <person name="Colwell R.R."/>
            <person name="Mekalanos J.J."/>
            <person name="Venter J.C."/>
            <person name="Fraser C.M."/>
        </authorList>
    </citation>
    <scope>NUCLEOTIDE SEQUENCE [LARGE SCALE GENOMIC DNA]</scope>
    <source>
        <strain>ATCC 39315 / El Tor Inaba N16961</strain>
    </source>
</reference>
<reference key="2">
    <citation type="journal article" date="2015" name="Acta Crystallogr. F Struct. Biol. Commun.">
        <title>Expression, purification and preliminary crystallographic analysis of a haem-utilizing protein, HutX, from Vibrio cholerae.</title>
        <authorList>
            <person name="Su T."/>
            <person name="Chi K."/>
            <person name="Wang K."/>
            <person name="Guo L."/>
            <person name="Huang Y."/>
        </authorList>
    </citation>
    <scope>CRYSTALLIZATION</scope>
    <scope>HEME-BINDING</scope>
    <scope>SUBUNIT</scope>
    <source>
        <strain>ATCC 39315 / El Tor Inaba N16961</strain>
    </source>
</reference>
<reference evidence="8" key="3">
    <citation type="journal article" date="2016" name="Biochemistry">
        <title>Cytoplasmic heme-binding protein (HutX) from Vibrio cholerae is an intracellular heme transport protein for the heme-degrading enzyme, HutZ.</title>
        <authorList>
            <person name="Sekine Y."/>
            <person name="Tanzawa T."/>
            <person name="Tanaka Y."/>
            <person name="Ishimori K."/>
            <person name="Uchida T."/>
        </authorList>
    </citation>
    <scope>X-RAY CRYSTALLOGRAPHY (2.90 ANGSTROMS) OF 27-193</scope>
    <scope>FUNCTION</scope>
    <scope>HEME-BINDING</scope>
    <scope>SUBUNIT</scope>
    <scope>INTERACTION WITH HUTZ</scope>
    <scope>SUBCELLULAR LOCATION</scope>
    <scope>MUTAGENESIS OF 116-TYR-TYR-117</scope>
</reference>
<proteinExistence type="evidence at protein level"/>
<sequence length="193" mass="21714">MYSGAYSFVQISTAAYRISITRLEKTMESLQQQVAQLLEQQPTLLPAAMAEQLNVTEFDIVHALPEEMVAVVDGSHAQTILESLPEWGPVTTIMTIAGSIFEVKAPFPKGKVARGYYNLMGRDGELHGHLKLENISHVALVSKPFMGRESHYFGFFTAQGENAFKIYLGRDEKRELIPEQVARFKAMQQQHKQ</sequence>
<gene>
    <name evidence="3" type="primary">hutX</name>
    <name evidence="7" type="ordered locus">VC_A0908</name>
</gene>
<evidence type="ECO:0000269" key="1">
    <source>
    </source>
</evidence>
<evidence type="ECO:0000269" key="2">
    <source>
    </source>
</evidence>
<evidence type="ECO:0000303" key="3">
    <source>
    </source>
</evidence>
<evidence type="ECO:0000303" key="4">
    <source>
    </source>
</evidence>
<evidence type="ECO:0000305" key="5"/>
<evidence type="ECO:0000305" key="6">
    <source>
    </source>
</evidence>
<evidence type="ECO:0000312" key="7">
    <source>
        <dbReference type="EMBL" id="AAF96805.1"/>
    </source>
</evidence>
<evidence type="ECO:0007744" key="8">
    <source>
        <dbReference type="PDB" id="5EXV"/>
    </source>
</evidence>
<evidence type="ECO:0007829" key="9">
    <source>
        <dbReference type="PDB" id="5EXV"/>
    </source>
</evidence>
<name>HUTX_VIBCH</name>
<keyword id="KW-0002">3D-structure</keyword>
<keyword id="KW-0963">Cytoplasm</keyword>
<keyword id="KW-0349">Heme</keyword>
<keyword id="KW-0408">Iron</keyword>
<keyword id="KW-0479">Metal-binding</keyword>
<keyword id="KW-1185">Reference proteome</keyword>
<feature type="chain" id="PRO_0000446446" description="Intracellular heme transport protein HutX">
    <location>
        <begin position="1"/>
        <end position="193"/>
    </location>
</feature>
<feature type="binding site" description="axial binding residue" evidence="6">
    <location>
        <position position="116"/>
    </location>
    <ligand>
        <name>heme</name>
        <dbReference type="ChEBI" id="CHEBI:30413"/>
    </ligand>
    <ligandPart>
        <name>Fe</name>
        <dbReference type="ChEBI" id="CHEBI:18248"/>
    </ligandPart>
</feature>
<feature type="mutagenesis site" description="Weakens heme binding." evidence="2">
    <original>YY</original>
    <variation>FF</variation>
    <location>
        <begin position="116"/>
        <end position="117"/>
    </location>
</feature>
<feature type="helix" evidence="9">
    <location>
        <begin position="30"/>
        <end position="33"/>
    </location>
</feature>
<feature type="helix" evidence="9">
    <location>
        <begin position="37"/>
        <end position="40"/>
    </location>
</feature>
<feature type="helix" evidence="9">
    <location>
        <begin position="46"/>
        <end position="53"/>
    </location>
</feature>
<feature type="helix" evidence="9">
    <location>
        <begin position="57"/>
        <end position="62"/>
    </location>
</feature>
<feature type="turn" evidence="9">
    <location>
        <begin position="66"/>
        <end position="68"/>
    </location>
</feature>
<feature type="strand" evidence="9">
    <location>
        <begin position="69"/>
        <end position="73"/>
    </location>
</feature>
<feature type="helix" evidence="9">
    <location>
        <begin position="78"/>
        <end position="87"/>
    </location>
</feature>
<feature type="strand" evidence="9">
    <location>
        <begin position="89"/>
        <end position="96"/>
    </location>
</feature>
<feature type="strand" evidence="9">
    <location>
        <begin position="99"/>
        <end position="106"/>
    </location>
</feature>
<feature type="strand" evidence="9">
    <location>
        <begin position="116"/>
        <end position="118"/>
    </location>
</feature>
<feature type="strand" evidence="9">
    <location>
        <begin position="127"/>
        <end position="130"/>
    </location>
</feature>
<feature type="helix" evidence="9">
    <location>
        <begin position="132"/>
        <end position="134"/>
    </location>
</feature>
<feature type="strand" evidence="9">
    <location>
        <begin position="137"/>
        <end position="142"/>
    </location>
</feature>
<feature type="strand" evidence="9">
    <location>
        <begin position="151"/>
        <end position="156"/>
    </location>
</feature>
<feature type="strand" evidence="9">
    <location>
        <begin position="162"/>
        <end position="168"/>
    </location>
</feature>
<feature type="strand" evidence="9">
    <location>
        <begin position="172"/>
        <end position="176"/>
    </location>
</feature>
<feature type="helix" evidence="9">
    <location>
        <begin position="178"/>
        <end position="187"/>
    </location>
</feature>
<protein>
    <recommendedName>
        <fullName evidence="4">Intracellular heme transport protein HutX</fullName>
    </recommendedName>
    <alternativeName>
        <fullName evidence="5">Heme-binding protein HutX</fullName>
    </alternativeName>
</protein>
<accession>Q9KL40</accession>
<comment type="function">
    <text evidence="1 2">Binds heme (PubMed:25664785, PubMed:26807477). Heme is transferred to the heme-degrading enzyme HutZ via a specific protein-protein interaction (PubMed:26807477).</text>
</comment>
<comment type="subunit">
    <text evidence="1 2">Homodimer (PubMed:25664785, PubMed:26807477). Interacts with HutZ (PubMed:26807477).</text>
</comment>
<comment type="subcellular location">
    <subcellularLocation>
        <location evidence="2">Cytoplasm</location>
    </subcellularLocation>
</comment>